<evidence type="ECO:0000255" key="1">
    <source>
        <dbReference type="HAMAP-Rule" id="MF_00402"/>
    </source>
</evidence>
<evidence type="ECO:0000305" key="2"/>
<comment type="function">
    <text evidence="1">This protein is located at the 30S-50S ribosomal subunit interface and may play a role in the structure and function of the aminoacyl-tRNA binding site.</text>
</comment>
<comment type="similarity">
    <text evidence="1">Belongs to the bacterial ribosomal protein bL19 family.</text>
</comment>
<reference key="1">
    <citation type="submission" date="2007-09" db="EMBL/GenBank/DDBJ databases">
        <title>Complete genome sequencing of Rickettsia bellii.</title>
        <authorList>
            <person name="Madan A."/>
            <person name="Lee H."/>
            <person name="Madan A."/>
            <person name="Yoon J.-G."/>
            <person name="Ryu G.-Y."/>
            <person name="Dasch G."/>
            <person name="Ereemeva M."/>
        </authorList>
    </citation>
    <scope>NUCLEOTIDE SEQUENCE [LARGE SCALE GENOMIC DNA]</scope>
    <source>
        <strain>OSU 85-389</strain>
    </source>
</reference>
<protein>
    <recommendedName>
        <fullName evidence="1">Large ribosomal subunit protein bL19</fullName>
    </recommendedName>
    <alternativeName>
        <fullName evidence="2">50S ribosomal protein L19</fullName>
    </alternativeName>
</protein>
<feature type="chain" id="PRO_1000049732" description="Large ribosomal subunit protein bL19">
    <location>
        <begin position="1"/>
        <end position="142"/>
    </location>
</feature>
<accession>A8GUW0</accession>
<proteinExistence type="inferred from homology"/>
<gene>
    <name evidence="1" type="primary">rplS</name>
    <name type="ordered locus">A1I_01155</name>
</gene>
<sequence length="142" mass="16356">MNIIDRFEQENISKLIENKKIPDFKAGDTVKVTVKIVDRSVEKDGKEKLTERFQAYEGVVIAKRNRGITSSFLVRKISHGEGVERRFMTYSPVVHAIDVVKYGVVRRAKLYYLRERSGKSARIKERHMHIAKKPKAKVAEAV</sequence>
<organism>
    <name type="scientific">Rickettsia bellii (strain OSU 85-389)</name>
    <dbReference type="NCBI Taxonomy" id="391896"/>
    <lineage>
        <taxon>Bacteria</taxon>
        <taxon>Pseudomonadati</taxon>
        <taxon>Pseudomonadota</taxon>
        <taxon>Alphaproteobacteria</taxon>
        <taxon>Rickettsiales</taxon>
        <taxon>Rickettsiaceae</taxon>
        <taxon>Rickettsieae</taxon>
        <taxon>Rickettsia</taxon>
        <taxon>belli group</taxon>
    </lineage>
</organism>
<dbReference type="EMBL" id="CP000849">
    <property type="protein sequence ID" value="ABV78627.1"/>
    <property type="molecule type" value="Genomic_DNA"/>
</dbReference>
<dbReference type="RefSeq" id="WP_011477875.1">
    <property type="nucleotide sequence ID" value="NC_009883.1"/>
</dbReference>
<dbReference type="SMR" id="A8GUW0"/>
<dbReference type="KEGG" id="rbo:A1I_01155"/>
<dbReference type="HOGENOM" id="CLU_103507_1_0_5"/>
<dbReference type="GO" id="GO:0022625">
    <property type="term" value="C:cytosolic large ribosomal subunit"/>
    <property type="evidence" value="ECO:0007669"/>
    <property type="project" value="TreeGrafter"/>
</dbReference>
<dbReference type="GO" id="GO:0003735">
    <property type="term" value="F:structural constituent of ribosome"/>
    <property type="evidence" value="ECO:0007669"/>
    <property type="project" value="InterPro"/>
</dbReference>
<dbReference type="GO" id="GO:0006412">
    <property type="term" value="P:translation"/>
    <property type="evidence" value="ECO:0007669"/>
    <property type="project" value="UniProtKB-UniRule"/>
</dbReference>
<dbReference type="Gene3D" id="2.30.30.790">
    <property type="match status" value="1"/>
</dbReference>
<dbReference type="HAMAP" id="MF_00402">
    <property type="entry name" value="Ribosomal_bL19"/>
    <property type="match status" value="1"/>
</dbReference>
<dbReference type="InterPro" id="IPR001857">
    <property type="entry name" value="Ribosomal_bL19"/>
</dbReference>
<dbReference type="InterPro" id="IPR018257">
    <property type="entry name" value="Ribosomal_bL19_CS"/>
</dbReference>
<dbReference type="InterPro" id="IPR038657">
    <property type="entry name" value="Ribosomal_bL19_sf"/>
</dbReference>
<dbReference type="InterPro" id="IPR008991">
    <property type="entry name" value="Translation_prot_SH3-like_sf"/>
</dbReference>
<dbReference type="NCBIfam" id="TIGR01024">
    <property type="entry name" value="rplS_bact"/>
    <property type="match status" value="1"/>
</dbReference>
<dbReference type="PANTHER" id="PTHR15680:SF9">
    <property type="entry name" value="LARGE RIBOSOMAL SUBUNIT PROTEIN BL19M"/>
    <property type="match status" value="1"/>
</dbReference>
<dbReference type="PANTHER" id="PTHR15680">
    <property type="entry name" value="RIBOSOMAL PROTEIN L19"/>
    <property type="match status" value="1"/>
</dbReference>
<dbReference type="Pfam" id="PF01245">
    <property type="entry name" value="Ribosomal_L19"/>
    <property type="match status" value="1"/>
</dbReference>
<dbReference type="PIRSF" id="PIRSF002191">
    <property type="entry name" value="Ribosomal_L19"/>
    <property type="match status" value="1"/>
</dbReference>
<dbReference type="PRINTS" id="PR00061">
    <property type="entry name" value="RIBOSOMALL19"/>
</dbReference>
<dbReference type="SUPFAM" id="SSF50104">
    <property type="entry name" value="Translation proteins SH3-like domain"/>
    <property type="match status" value="1"/>
</dbReference>
<dbReference type="PROSITE" id="PS01015">
    <property type="entry name" value="RIBOSOMAL_L19"/>
    <property type="match status" value="1"/>
</dbReference>
<keyword id="KW-0687">Ribonucleoprotein</keyword>
<keyword id="KW-0689">Ribosomal protein</keyword>
<name>RL19_RICB8</name>